<sequence>MSTLDATRAELGLVVLYLNKAEARDKICRAIQYGSKFISNGQPGTAQDVDRSTTLARKVFRLLKWVNDLHGLISPPAKGTPLTLVLLGKSKNALLSTFLFLDQFVWLGRTGIYKNKERTDRIVRISLYCWMASSVCAGLVELGELKRLSKSMRKLARELRDTDKYENDQYKSKMKQSDERLLALVKAAMDVVVAVGLLQLSPKKITPRVTGAFGFVTSLISCYQQLPSRAPAIKVKA</sequence>
<comment type="function">
    <text evidence="1">Involved in peroxisomal proliferation.</text>
</comment>
<comment type="subcellular location">
    <subcellularLocation>
        <location evidence="1">Peroxisome membrane</location>
        <topology evidence="1">Multi-pass membrane protein</topology>
    </subcellularLocation>
</comment>
<comment type="tissue specificity">
    <text evidence="3">Expressed in seedlings, leaf sheaths, flag leaf, panicles and spikelets.</text>
</comment>
<comment type="developmental stage">
    <text evidence="3">Expressed in endosperm 21 days after pollination.</text>
</comment>
<comment type="induction">
    <text evidence="3">By abscisic acid, H(2)O(2) and nitrogen deprivation. Down-regulated by salt stress.</text>
</comment>
<comment type="similarity">
    <text evidence="4">Belongs to the peroxin-11 family.</text>
</comment>
<keyword id="KW-0472">Membrane</keyword>
<keyword id="KW-0576">Peroxisome</keyword>
<keyword id="KW-0962">Peroxisome biogenesis</keyword>
<keyword id="KW-1185">Reference proteome</keyword>
<keyword id="KW-0812">Transmembrane</keyword>
<keyword id="KW-1133">Transmembrane helix</keyword>
<evidence type="ECO:0000250" key="1"/>
<evidence type="ECO:0000255" key="2"/>
<evidence type="ECO:0000269" key="3">
    <source>
    </source>
</evidence>
<evidence type="ECO:0000305" key="4"/>
<evidence type="ECO:0000312" key="5">
    <source>
        <dbReference type="EMBL" id="EEE58215.1"/>
    </source>
</evidence>
<protein>
    <recommendedName>
        <fullName>Peroxisomal membrane protein 11-1</fullName>
    </recommendedName>
    <alternativeName>
        <fullName>OsPEX11-1</fullName>
    </alternativeName>
    <alternativeName>
        <fullName>Peroxin-11-1</fullName>
    </alternativeName>
</protein>
<feature type="chain" id="PRO_0000330300" description="Peroxisomal membrane protein 11-1">
    <location>
        <begin position="1"/>
        <end position="237"/>
    </location>
</feature>
<feature type="topological domain" description="Cytoplasmic" evidence="2">
    <location>
        <begin position="1"/>
        <end position="92"/>
    </location>
</feature>
<feature type="transmembrane region" description="Helical" evidence="2">
    <location>
        <begin position="93"/>
        <end position="113"/>
    </location>
</feature>
<feature type="topological domain" description="Lumenal" evidence="2">
    <location>
        <begin position="114"/>
        <end position="204"/>
    </location>
</feature>
<feature type="transmembrane region" description="Helical" evidence="2">
    <location>
        <begin position="205"/>
        <end position="223"/>
    </location>
</feature>
<feature type="topological domain" description="Cytoplasmic" evidence="2">
    <location>
        <begin position="224"/>
        <end position="237"/>
    </location>
</feature>
<reference key="1">
    <citation type="journal article" date="2005" name="Genome Res.">
        <title>Sequence, annotation, and analysis of synteny between rice chromosome 3 and diverged grass species.</title>
        <authorList>
            <consortium name="The rice chromosome 3 sequencing consortium"/>
            <person name="Buell C.R."/>
            <person name="Yuan Q."/>
            <person name="Ouyang S."/>
            <person name="Liu J."/>
            <person name="Zhu W."/>
            <person name="Wang A."/>
            <person name="Maiti R."/>
            <person name="Haas B."/>
            <person name="Wortman J."/>
            <person name="Pertea M."/>
            <person name="Jones K.M."/>
            <person name="Kim M."/>
            <person name="Overton L."/>
            <person name="Tsitrin T."/>
            <person name="Fadrosh D."/>
            <person name="Bera J."/>
            <person name="Weaver B."/>
            <person name="Jin S."/>
            <person name="Johri S."/>
            <person name="Reardon M."/>
            <person name="Webb K."/>
            <person name="Hill J."/>
            <person name="Moffat K."/>
            <person name="Tallon L."/>
            <person name="Van Aken S."/>
            <person name="Lewis M."/>
            <person name="Utterback T."/>
            <person name="Feldblyum T."/>
            <person name="Zismann V."/>
            <person name="Iobst S."/>
            <person name="Hsiao J."/>
            <person name="de Vazeille A.R."/>
            <person name="Salzberg S.L."/>
            <person name="White O."/>
            <person name="Fraser C.M."/>
            <person name="Yu Y."/>
            <person name="Kim H."/>
            <person name="Rambo T."/>
            <person name="Currie J."/>
            <person name="Collura K."/>
            <person name="Kernodle-Thompson S."/>
            <person name="Wei F."/>
            <person name="Kudrna K."/>
            <person name="Ammiraju J.S.S."/>
            <person name="Luo M."/>
            <person name="Goicoechea J.L."/>
            <person name="Wing R.A."/>
            <person name="Henry D."/>
            <person name="Oates R."/>
            <person name="Palmer M."/>
            <person name="Pries G."/>
            <person name="Saski C."/>
            <person name="Simmons J."/>
            <person name="Soderlund C."/>
            <person name="Nelson W."/>
            <person name="de la Bastide M."/>
            <person name="Spiegel L."/>
            <person name="Nascimento L."/>
            <person name="Huang E."/>
            <person name="Preston R."/>
            <person name="Zutavern T."/>
            <person name="Palmer L."/>
            <person name="O'Shaughnessy A."/>
            <person name="Dike S."/>
            <person name="McCombie W.R."/>
            <person name="Minx P."/>
            <person name="Cordum H."/>
            <person name="Wilson R."/>
            <person name="Jin W."/>
            <person name="Lee H.R."/>
            <person name="Jiang J."/>
            <person name="Jackson S."/>
        </authorList>
    </citation>
    <scope>NUCLEOTIDE SEQUENCE [LARGE SCALE GENOMIC DNA]</scope>
    <source>
        <strain>cv. Nipponbare</strain>
    </source>
</reference>
<reference key="2">
    <citation type="journal article" date="2005" name="Nature">
        <title>The map-based sequence of the rice genome.</title>
        <authorList>
            <consortium name="International rice genome sequencing project (IRGSP)"/>
        </authorList>
    </citation>
    <scope>NUCLEOTIDE SEQUENCE [LARGE SCALE GENOMIC DNA]</scope>
    <source>
        <strain>cv. Nipponbare</strain>
    </source>
</reference>
<reference key="3">
    <citation type="journal article" date="2008" name="Nucleic Acids Res.">
        <title>The rice annotation project database (RAP-DB): 2008 update.</title>
        <authorList>
            <consortium name="The rice annotation project (RAP)"/>
        </authorList>
    </citation>
    <scope>GENOME REANNOTATION</scope>
    <source>
        <strain>cv. Nipponbare</strain>
    </source>
</reference>
<reference key="4">
    <citation type="journal article" date="2013" name="Rice">
        <title>Improvement of the Oryza sativa Nipponbare reference genome using next generation sequence and optical map data.</title>
        <authorList>
            <person name="Kawahara Y."/>
            <person name="de la Bastide M."/>
            <person name="Hamilton J.P."/>
            <person name="Kanamori H."/>
            <person name="McCombie W.R."/>
            <person name="Ouyang S."/>
            <person name="Schwartz D.C."/>
            <person name="Tanaka T."/>
            <person name="Wu J."/>
            <person name="Zhou S."/>
            <person name="Childs K.L."/>
            <person name="Davidson R.M."/>
            <person name="Lin H."/>
            <person name="Quesada-Ocampo L."/>
            <person name="Vaillancourt B."/>
            <person name="Sakai H."/>
            <person name="Lee S.S."/>
            <person name="Kim J."/>
            <person name="Numa H."/>
            <person name="Itoh T."/>
            <person name="Buell C.R."/>
            <person name="Matsumoto T."/>
        </authorList>
    </citation>
    <scope>GENOME REANNOTATION</scope>
    <source>
        <strain>cv. Nipponbare</strain>
    </source>
</reference>
<reference key="5">
    <citation type="journal article" date="2005" name="PLoS Biol.">
        <title>The genomes of Oryza sativa: a history of duplications.</title>
        <authorList>
            <person name="Yu J."/>
            <person name="Wang J."/>
            <person name="Lin W."/>
            <person name="Li S."/>
            <person name="Li H."/>
            <person name="Zhou J."/>
            <person name="Ni P."/>
            <person name="Dong W."/>
            <person name="Hu S."/>
            <person name="Zeng C."/>
            <person name="Zhang J."/>
            <person name="Zhang Y."/>
            <person name="Li R."/>
            <person name="Xu Z."/>
            <person name="Li S."/>
            <person name="Li X."/>
            <person name="Zheng H."/>
            <person name="Cong L."/>
            <person name="Lin L."/>
            <person name="Yin J."/>
            <person name="Geng J."/>
            <person name="Li G."/>
            <person name="Shi J."/>
            <person name="Liu J."/>
            <person name="Lv H."/>
            <person name="Li J."/>
            <person name="Wang J."/>
            <person name="Deng Y."/>
            <person name="Ran L."/>
            <person name="Shi X."/>
            <person name="Wang X."/>
            <person name="Wu Q."/>
            <person name="Li C."/>
            <person name="Ren X."/>
            <person name="Wang J."/>
            <person name="Wang X."/>
            <person name="Li D."/>
            <person name="Liu D."/>
            <person name="Zhang X."/>
            <person name="Ji Z."/>
            <person name="Zhao W."/>
            <person name="Sun Y."/>
            <person name="Zhang Z."/>
            <person name="Bao J."/>
            <person name="Han Y."/>
            <person name="Dong L."/>
            <person name="Ji J."/>
            <person name="Chen P."/>
            <person name="Wu S."/>
            <person name="Liu J."/>
            <person name="Xiao Y."/>
            <person name="Bu D."/>
            <person name="Tan J."/>
            <person name="Yang L."/>
            <person name="Ye C."/>
            <person name="Zhang J."/>
            <person name="Xu J."/>
            <person name="Zhou Y."/>
            <person name="Yu Y."/>
            <person name="Zhang B."/>
            <person name="Zhuang S."/>
            <person name="Wei H."/>
            <person name="Liu B."/>
            <person name="Lei M."/>
            <person name="Yu H."/>
            <person name="Li Y."/>
            <person name="Xu H."/>
            <person name="Wei S."/>
            <person name="He X."/>
            <person name="Fang L."/>
            <person name="Zhang Z."/>
            <person name="Zhang Y."/>
            <person name="Huang X."/>
            <person name="Su Z."/>
            <person name="Tong W."/>
            <person name="Li J."/>
            <person name="Tong Z."/>
            <person name="Li S."/>
            <person name="Ye J."/>
            <person name="Wang L."/>
            <person name="Fang L."/>
            <person name="Lei T."/>
            <person name="Chen C.-S."/>
            <person name="Chen H.-C."/>
            <person name="Xu Z."/>
            <person name="Li H."/>
            <person name="Huang H."/>
            <person name="Zhang F."/>
            <person name="Xu H."/>
            <person name="Li N."/>
            <person name="Zhao C."/>
            <person name="Li S."/>
            <person name="Dong L."/>
            <person name="Huang Y."/>
            <person name="Li L."/>
            <person name="Xi Y."/>
            <person name="Qi Q."/>
            <person name="Li W."/>
            <person name="Zhang B."/>
            <person name="Hu W."/>
            <person name="Zhang Y."/>
            <person name="Tian X."/>
            <person name="Jiao Y."/>
            <person name="Liang X."/>
            <person name="Jin J."/>
            <person name="Gao L."/>
            <person name="Zheng W."/>
            <person name="Hao B."/>
            <person name="Liu S.-M."/>
            <person name="Wang W."/>
            <person name="Yuan L."/>
            <person name="Cao M."/>
            <person name="McDermott J."/>
            <person name="Samudrala R."/>
            <person name="Wang J."/>
            <person name="Wong G.K.-S."/>
            <person name="Yang H."/>
        </authorList>
    </citation>
    <scope>NUCLEOTIDE SEQUENCE [LARGE SCALE GENOMIC DNA]</scope>
    <source>
        <strain>cv. Nipponbare</strain>
    </source>
</reference>
<reference key="6">
    <citation type="journal article" date="2003" name="Science">
        <title>Collection, mapping, and annotation of over 28,000 cDNA clones from japonica rice.</title>
        <authorList>
            <consortium name="The rice full-length cDNA consortium"/>
        </authorList>
    </citation>
    <scope>NUCLEOTIDE SEQUENCE [LARGE SCALE MRNA]</scope>
    <source>
        <strain>cv. Nipponbare</strain>
    </source>
</reference>
<reference key="7">
    <citation type="journal article" date="2008" name="Gene">
        <title>Comprehensive sequence and expression profile analysis of PEX11 gene family in rice.</title>
        <authorList>
            <person name="Nayidu N.K."/>
            <person name="Wang L."/>
            <person name="Xie W."/>
            <person name="Zhang C."/>
            <person name="Fan C."/>
            <person name="Lian X."/>
            <person name="Zhang Q."/>
            <person name="Xiong L."/>
        </authorList>
    </citation>
    <scope>TISSUE SPECIFICITY</scope>
    <scope>DEVELOPMENTAL STAGE</scope>
    <scope>INDUCTION</scope>
    <scope>GENE FAMILY</scope>
    <scope>NOMENCLATURE</scope>
</reference>
<dbReference type="EMBL" id="DP000009">
    <property type="protein sequence ID" value="ABF93659.1"/>
    <property type="molecule type" value="Genomic_DNA"/>
</dbReference>
<dbReference type="EMBL" id="AP008209">
    <property type="protein sequence ID" value="BAF10679.1"/>
    <property type="molecule type" value="Genomic_DNA"/>
</dbReference>
<dbReference type="EMBL" id="AP014959">
    <property type="protein sequence ID" value="BAS81988.1"/>
    <property type="molecule type" value="Genomic_DNA"/>
</dbReference>
<dbReference type="EMBL" id="CM000140">
    <property type="protein sequence ID" value="EEE58215.1"/>
    <property type="molecule type" value="Genomic_DNA"/>
</dbReference>
<dbReference type="EMBL" id="AK104570">
    <property type="protein sequence ID" value="BAG96795.1"/>
    <property type="molecule type" value="mRNA"/>
</dbReference>
<dbReference type="EMBL" id="AK104706">
    <property type="protein sequence ID" value="BAG96893.1"/>
    <property type="molecule type" value="mRNA"/>
</dbReference>
<dbReference type="RefSeq" id="XP_015630822.1">
    <property type="nucleotide sequence ID" value="XM_015775336.1"/>
</dbReference>
<dbReference type="RefSeq" id="XP_015630823.1">
    <property type="nucleotide sequence ID" value="XM_015775337.1"/>
</dbReference>
<dbReference type="FunCoup" id="Q10SM7">
    <property type="interactions" value="73"/>
</dbReference>
<dbReference type="STRING" id="39947.Q10SM7"/>
<dbReference type="PaxDb" id="39947-Q10SM7"/>
<dbReference type="EnsemblPlants" id="Os03t0117100-01">
    <property type="protein sequence ID" value="Os03t0117100-01"/>
    <property type="gene ID" value="Os03g0117100"/>
</dbReference>
<dbReference type="EnsemblPlants" id="Os03t0117100-02">
    <property type="protein sequence ID" value="Os03t0117100-02"/>
    <property type="gene ID" value="Os03g0117100"/>
</dbReference>
<dbReference type="Gramene" id="Os03t0117100-01">
    <property type="protein sequence ID" value="Os03t0117100-01"/>
    <property type="gene ID" value="Os03g0117100"/>
</dbReference>
<dbReference type="Gramene" id="Os03t0117100-02">
    <property type="protein sequence ID" value="Os03t0117100-02"/>
    <property type="gene ID" value="Os03g0117100"/>
</dbReference>
<dbReference type="KEGG" id="dosa:Os03g0117100"/>
<dbReference type="eggNOG" id="KOG4186">
    <property type="taxonomic scope" value="Eukaryota"/>
</dbReference>
<dbReference type="HOGENOM" id="CLU_075417_0_0_1"/>
<dbReference type="InParanoid" id="Q10SM7"/>
<dbReference type="OMA" id="QFVWAGR"/>
<dbReference type="OrthoDB" id="411017at2759"/>
<dbReference type="Proteomes" id="UP000000763">
    <property type="component" value="Chromosome 3"/>
</dbReference>
<dbReference type="Proteomes" id="UP000007752">
    <property type="component" value="Chromosome 3"/>
</dbReference>
<dbReference type="Proteomes" id="UP000059680">
    <property type="component" value="Chromosome 3"/>
</dbReference>
<dbReference type="GO" id="GO:0005778">
    <property type="term" value="C:peroxisomal membrane"/>
    <property type="evidence" value="ECO:0000318"/>
    <property type="project" value="GO_Central"/>
</dbReference>
<dbReference type="GO" id="GO:0042802">
    <property type="term" value="F:identical protein binding"/>
    <property type="evidence" value="ECO:0007669"/>
    <property type="project" value="UniProtKB-ARBA"/>
</dbReference>
<dbReference type="GO" id="GO:0016559">
    <property type="term" value="P:peroxisome fission"/>
    <property type="evidence" value="ECO:0000318"/>
    <property type="project" value="GO_Central"/>
</dbReference>
<dbReference type="GO" id="GO:0044375">
    <property type="term" value="P:regulation of peroxisome size"/>
    <property type="evidence" value="ECO:0007669"/>
    <property type="project" value="UniProtKB-ARBA"/>
</dbReference>
<dbReference type="InterPro" id="IPR008733">
    <property type="entry name" value="PEX11"/>
</dbReference>
<dbReference type="PANTHER" id="PTHR12652">
    <property type="entry name" value="PEROXISOMAL BIOGENESIS FACTOR 11"/>
    <property type="match status" value="1"/>
</dbReference>
<dbReference type="PANTHER" id="PTHR12652:SF44">
    <property type="entry name" value="PEROXISOMAL MEMBRANE PROTEIN 11-1"/>
    <property type="match status" value="1"/>
</dbReference>
<dbReference type="Pfam" id="PF05648">
    <property type="entry name" value="PEX11"/>
    <property type="match status" value="1"/>
</dbReference>
<gene>
    <name type="primary">PEX11-1</name>
    <name type="ordered locus">Os03g0117100</name>
    <name type="ordered locus">LOC_Os03g02590</name>
    <name evidence="5" type="ORF">OsJ_09180</name>
</gene>
<name>PX111_ORYSJ</name>
<proteinExistence type="evidence at transcript level"/>
<organism>
    <name type="scientific">Oryza sativa subsp. japonica</name>
    <name type="common">Rice</name>
    <dbReference type="NCBI Taxonomy" id="39947"/>
    <lineage>
        <taxon>Eukaryota</taxon>
        <taxon>Viridiplantae</taxon>
        <taxon>Streptophyta</taxon>
        <taxon>Embryophyta</taxon>
        <taxon>Tracheophyta</taxon>
        <taxon>Spermatophyta</taxon>
        <taxon>Magnoliopsida</taxon>
        <taxon>Liliopsida</taxon>
        <taxon>Poales</taxon>
        <taxon>Poaceae</taxon>
        <taxon>BOP clade</taxon>
        <taxon>Oryzoideae</taxon>
        <taxon>Oryzeae</taxon>
        <taxon>Oryzinae</taxon>
        <taxon>Oryza</taxon>
        <taxon>Oryza sativa</taxon>
    </lineage>
</organism>
<accession>Q10SM7</accession>
<accession>B7EWP8</accession>